<evidence type="ECO:0000255" key="1">
    <source>
        <dbReference type="HAMAP-Rule" id="MF_00145"/>
    </source>
</evidence>
<name>PGK_SHEDO</name>
<protein>
    <recommendedName>
        <fullName evidence="1">Phosphoglycerate kinase</fullName>
        <ecNumber evidence="1">2.7.2.3</ecNumber>
    </recommendedName>
</protein>
<organism>
    <name type="scientific">Shewanella denitrificans (strain OS217 / ATCC BAA-1090 / DSM 15013)</name>
    <dbReference type="NCBI Taxonomy" id="318161"/>
    <lineage>
        <taxon>Bacteria</taxon>
        <taxon>Pseudomonadati</taxon>
        <taxon>Pseudomonadota</taxon>
        <taxon>Gammaproteobacteria</taxon>
        <taxon>Alteromonadales</taxon>
        <taxon>Shewanellaceae</taxon>
        <taxon>Shewanella</taxon>
    </lineage>
</organism>
<proteinExistence type="inferred from homology"/>
<accession>Q12QA3</accession>
<keyword id="KW-0067">ATP-binding</keyword>
<keyword id="KW-0963">Cytoplasm</keyword>
<keyword id="KW-0324">Glycolysis</keyword>
<keyword id="KW-0418">Kinase</keyword>
<keyword id="KW-0547">Nucleotide-binding</keyword>
<keyword id="KW-1185">Reference proteome</keyword>
<keyword id="KW-0808">Transferase</keyword>
<gene>
    <name evidence="1" type="primary">pgk</name>
    <name type="ordered locus">Sden_1085</name>
</gene>
<sequence>MAIINMTDLDLTNKRVLIRQDLNVPVSDGMVTSDARLRASLPTIQLALDKGAAVMVMSHLGRPTEGEFNNEFSLQPVVDYLAKALKSPVRLATDYLDGVEANVGEVVVFENVRFNQGEGKNDEALSKKMAALCDVYVMDAFGTAHRAQASTHGVGMFAPIACAGPLLAQELDALGKALDNPARPMVAIVGGSKVSTKLTVLESLSGIVDQLVVGGGIANTFIAAAGFNVGKSLYEADLVDEAKRLVANARSRGGDIPVPTDVVVASEFSPTAAAKLVDVSQVSDTDMIFDIGPDSAEALAKIIETAGTIVWNGPVGVFEFDQFGKGTERIARAIADSKAFSIAGGGDTLAAVDKYNIADKVSYISTGGGAFLEFLEGKELPAVAMLEKRGA</sequence>
<reference key="1">
    <citation type="submission" date="2006-03" db="EMBL/GenBank/DDBJ databases">
        <title>Complete sequence of Shewanella denitrificans OS217.</title>
        <authorList>
            <consortium name="US DOE Joint Genome Institute"/>
            <person name="Copeland A."/>
            <person name="Lucas S."/>
            <person name="Lapidus A."/>
            <person name="Barry K."/>
            <person name="Detter J.C."/>
            <person name="Glavina del Rio T."/>
            <person name="Hammon N."/>
            <person name="Israni S."/>
            <person name="Dalin E."/>
            <person name="Tice H."/>
            <person name="Pitluck S."/>
            <person name="Brettin T."/>
            <person name="Bruce D."/>
            <person name="Han C."/>
            <person name="Tapia R."/>
            <person name="Gilna P."/>
            <person name="Kiss H."/>
            <person name="Schmutz J."/>
            <person name="Larimer F."/>
            <person name="Land M."/>
            <person name="Hauser L."/>
            <person name="Kyrpides N."/>
            <person name="Lykidis A."/>
            <person name="Richardson P."/>
        </authorList>
    </citation>
    <scope>NUCLEOTIDE SEQUENCE [LARGE SCALE GENOMIC DNA]</scope>
    <source>
        <strain>OS217 / ATCC BAA-1090 / DSM 15013</strain>
    </source>
</reference>
<comment type="catalytic activity">
    <reaction evidence="1">
        <text>(2R)-3-phosphoglycerate + ATP = (2R)-3-phospho-glyceroyl phosphate + ADP</text>
        <dbReference type="Rhea" id="RHEA:14801"/>
        <dbReference type="ChEBI" id="CHEBI:30616"/>
        <dbReference type="ChEBI" id="CHEBI:57604"/>
        <dbReference type="ChEBI" id="CHEBI:58272"/>
        <dbReference type="ChEBI" id="CHEBI:456216"/>
        <dbReference type="EC" id="2.7.2.3"/>
    </reaction>
</comment>
<comment type="pathway">
    <text evidence="1">Carbohydrate degradation; glycolysis; pyruvate from D-glyceraldehyde 3-phosphate: step 2/5.</text>
</comment>
<comment type="subunit">
    <text evidence="1">Monomer.</text>
</comment>
<comment type="subcellular location">
    <subcellularLocation>
        <location evidence="1">Cytoplasm</location>
    </subcellularLocation>
</comment>
<comment type="similarity">
    <text evidence="1">Belongs to the phosphoglycerate kinase family.</text>
</comment>
<dbReference type="EC" id="2.7.2.3" evidence="1"/>
<dbReference type="EMBL" id="CP000302">
    <property type="protein sequence ID" value="ABE54373.1"/>
    <property type="molecule type" value="Genomic_DNA"/>
</dbReference>
<dbReference type="RefSeq" id="WP_011495535.1">
    <property type="nucleotide sequence ID" value="NC_007954.1"/>
</dbReference>
<dbReference type="SMR" id="Q12QA3"/>
<dbReference type="STRING" id="318161.Sden_1085"/>
<dbReference type="KEGG" id="sdn:Sden_1085"/>
<dbReference type="eggNOG" id="COG0126">
    <property type="taxonomic scope" value="Bacteria"/>
</dbReference>
<dbReference type="HOGENOM" id="CLU_025427_0_2_6"/>
<dbReference type="OrthoDB" id="9808460at2"/>
<dbReference type="UniPathway" id="UPA00109">
    <property type="reaction ID" value="UER00185"/>
</dbReference>
<dbReference type="Proteomes" id="UP000001982">
    <property type="component" value="Chromosome"/>
</dbReference>
<dbReference type="GO" id="GO:0005829">
    <property type="term" value="C:cytosol"/>
    <property type="evidence" value="ECO:0007669"/>
    <property type="project" value="TreeGrafter"/>
</dbReference>
<dbReference type="GO" id="GO:0043531">
    <property type="term" value="F:ADP binding"/>
    <property type="evidence" value="ECO:0007669"/>
    <property type="project" value="TreeGrafter"/>
</dbReference>
<dbReference type="GO" id="GO:0005524">
    <property type="term" value="F:ATP binding"/>
    <property type="evidence" value="ECO:0007669"/>
    <property type="project" value="UniProtKB-KW"/>
</dbReference>
<dbReference type="GO" id="GO:0004618">
    <property type="term" value="F:phosphoglycerate kinase activity"/>
    <property type="evidence" value="ECO:0007669"/>
    <property type="project" value="UniProtKB-UniRule"/>
</dbReference>
<dbReference type="GO" id="GO:0006094">
    <property type="term" value="P:gluconeogenesis"/>
    <property type="evidence" value="ECO:0007669"/>
    <property type="project" value="TreeGrafter"/>
</dbReference>
<dbReference type="GO" id="GO:0006096">
    <property type="term" value="P:glycolytic process"/>
    <property type="evidence" value="ECO:0007669"/>
    <property type="project" value="UniProtKB-UniRule"/>
</dbReference>
<dbReference type="FunFam" id="3.40.50.1260:FF:000001">
    <property type="entry name" value="Phosphoglycerate kinase"/>
    <property type="match status" value="1"/>
</dbReference>
<dbReference type="FunFam" id="3.40.50.1260:FF:000002">
    <property type="entry name" value="Phosphoglycerate kinase"/>
    <property type="match status" value="1"/>
</dbReference>
<dbReference type="Gene3D" id="3.40.50.1260">
    <property type="entry name" value="Phosphoglycerate kinase, N-terminal domain"/>
    <property type="match status" value="2"/>
</dbReference>
<dbReference type="HAMAP" id="MF_00145">
    <property type="entry name" value="Phosphoglyc_kinase"/>
    <property type="match status" value="1"/>
</dbReference>
<dbReference type="InterPro" id="IPR001576">
    <property type="entry name" value="Phosphoglycerate_kinase"/>
</dbReference>
<dbReference type="InterPro" id="IPR015911">
    <property type="entry name" value="Phosphoglycerate_kinase_CS"/>
</dbReference>
<dbReference type="InterPro" id="IPR015824">
    <property type="entry name" value="Phosphoglycerate_kinase_N"/>
</dbReference>
<dbReference type="InterPro" id="IPR036043">
    <property type="entry name" value="Phosphoglycerate_kinase_sf"/>
</dbReference>
<dbReference type="PANTHER" id="PTHR11406">
    <property type="entry name" value="PHOSPHOGLYCERATE KINASE"/>
    <property type="match status" value="1"/>
</dbReference>
<dbReference type="PANTHER" id="PTHR11406:SF23">
    <property type="entry name" value="PHOSPHOGLYCERATE KINASE 1, CHLOROPLASTIC-RELATED"/>
    <property type="match status" value="1"/>
</dbReference>
<dbReference type="Pfam" id="PF00162">
    <property type="entry name" value="PGK"/>
    <property type="match status" value="1"/>
</dbReference>
<dbReference type="PIRSF" id="PIRSF000724">
    <property type="entry name" value="Pgk"/>
    <property type="match status" value="1"/>
</dbReference>
<dbReference type="PRINTS" id="PR00477">
    <property type="entry name" value="PHGLYCKINASE"/>
</dbReference>
<dbReference type="SUPFAM" id="SSF53748">
    <property type="entry name" value="Phosphoglycerate kinase"/>
    <property type="match status" value="1"/>
</dbReference>
<dbReference type="PROSITE" id="PS00111">
    <property type="entry name" value="PGLYCERATE_KINASE"/>
    <property type="match status" value="1"/>
</dbReference>
<feature type="chain" id="PRO_1000058056" description="Phosphoglycerate kinase">
    <location>
        <begin position="1"/>
        <end position="391"/>
    </location>
</feature>
<feature type="binding site" evidence="1">
    <location>
        <begin position="21"/>
        <end position="23"/>
    </location>
    <ligand>
        <name>substrate</name>
    </ligand>
</feature>
<feature type="binding site" evidence="1">
    <location>
        <position position="36"/>
    </location>
    <ligand>
        <name>substrate</name>
    </ligand>
</feature>
<feature type="binding site" evidence="1">
    <location>
        <begin position="59"/>
        <end position="62"/>
    </location>
    <ligand>
        <name>substrate</name>
    </ligand>
</feature>
<feature type="binding site" evidence="1">
    <location>
        <position position="113"/>
    </location>
    <ligand>
        <name>substrate</name>
    </ligand>
</feature>
<feature type="binding site" evidence="1">
    <location>
        <position position="146"/>
    </location>
    <ligand>
        <name>substrate</name>
    </ligand>
</feature>
<feature type="binding site" evidence="1">
    <location>
        <position position="197"/>
    </location>
    <ligand>
        <name>ATP</name>
        <dbReference type="ChEBI" id="CHEBI:30616"/>
    </ligand>
</feature>
<feature type="binding site" evidence="1">
    <location>
        <position position="319"/>
    </location>
    <ligand>
        <name>ATP</name>
        <dbReference type="ChEBI" id="CHEBI:30616"/>
    </ligand>
</feature>
<feature type="binding site" evidence="1">
    <location>
        <begin position="345"/>
        <end position="348"/>
    </location>
    <ligand>
        <name>ATP</name>
        <dbReference type="ChEBI" id="CHEBI:30616"/>
    </ligand>
</feature>